<sequence length="767" mass="86479">MATYLEFIQQNEERDGVRFSWNVWPSSRLEATRMVVPLACLLTPLKERPDLPPVQYEPVLCSRPTCKAVLNPLCQVDYRAKLWACNFCFQRNQFPPAYGGISEVNQPAELMPQFSTIEYVIQRGAQSPLIFLYVVDTCLEEDDLQALKESLQMSLSLLPPDALVGLITFGRMVQVHELSCEGISKSYVFRGTKDLTAKQIQDMLGLTKPAMPMQQARPAQPQEHPFASSRFLQPVHKIDMNLTDLLGELQRDPWPVTQGKRPLRSTGVALSIAVGLLEGTFPNTGARIMLFTGGPPTQGPGMVVGDELKIPIRSWHDIEKDNARFMKKATKHYEMLANRTAANGHCIDIYACALDQTGLLEMKCCANLTGGYMVMGDSFNTSLFKQTFQRIFTKDFNGDFRMAFGATLDVKTSRELKIAGAIGPCVSLNVKGPCVSENELGVGGTSQWKICGLDPTSTLGIYFEVVNQHNTPIPQGGRGAIQFVTHYQHSSTQRRIRVTTIARNWADVQSQLRHIEAAFDQEAAAVLMARLGVFRAESEEGPDVLRWLDRQLIRLCQKFGQYNKEDPTSFRLSDSFSLYPQFMFHLRRSPFLQVFNNSPDESSYYRHHFARQDLTQSLIMIQPILYSYSFHGPPEPVLLDSSSILADRILLMDTFFQIVIYLGETIAQWRKAGYQDMPEYENFKHLLQAPLDDAQEILQARFPMPRYINTEHGGSQARFLLSKVNPSQTHNNLYAWGQETGAPILTDDVSLQVFMDHLKKLAVSSAC</sequence>
<dbReference type="EMBL" id="X97065">
    <property type="protein sequence ID" value="CAA65775.1"/>
    <property type="molecule type" value="mRNA"/>
</dbReference>
<dbReference type="EMBL" id="AL121893">
    <property type="status" value="NOT_ANNOTATED_CDS"/>
    <property type="molecule type" value="Genomic_DNA"/>
</dbReference>
<dbReference type="EMBL" id="AL121900">
    <property type="status" value="NOT_ANNOTATED_CDS"/>
    <property type="molecule type" value="Genomic_DNA"/>
</dbReference>
<dbReference type="EMBL" id="CH471133">
    <property type="protein sequence ID" value="EAX10231.1"/>
    <property type="molecule type" value="Genomic_DNA"/>
</dbReference>
<dbReference type="EMBL" id="CH471133">
    <property type="protein sequence ID" value="EAX10232.1"/>
    <property type="molecule type" value="Genomic_DNA"/>
</dbReference>
<dbReference type="EMBL" id="CH471133">
    <property type="protein sequence ID" value="EAX10233.1"/>
    <property type="molecule type" value="Genomic_DNA"/>
</dbReference>
<dbReference type="EMBL" id="CH471133">
    <property type="protein sequence ID" value="EAX10234.1"/>
    <property type="molecule type" value="Genomic_DNA"/>
</dbReference>
<dbReference type="EMBL" id="CH471133">
    <property type="protein sequence ID" value="EAX10235.1"/>
    <property type="molecule type" value="Genomic_DNA"/>
</dbReference>
<dbReference type="EMBL" id="BC005032">
    <property type="protein sequence ID" value="AAH05032.1"/>
    <property type="molecule type" value="mRNA"/>
</dbReference>
<dbReference type="EMBL" id="BC005404">
    <property type="protein sequence ID" value="AAH05404.1"/>
    <property type="molecule type" value="mRNA"/>
</dbReference>
<dbReference type="EMBL" id="BC095404">
    <property type="protein sequence ID" value="AAH95404.1"/>
    <property type="molecule type" value="mRNA"/>
</dbReference>
<dbReference type="CCDS" id="CCDS13137.1"/>
<dbReference type="RefSeq" id="NP_001166216.1">
    <property type="nucleotide sequence ID" value="NM_001172745.3"/>
</dbReference>
<dbReference type="RefSeq" id="NP_006354.2">
    <property type="nucleotide sequence ID" value="NM_006363.4"/>
</dbReference>
<dbReference type="RefSeq" id="NP_116780.1">
    <property type="nucleotide sequence ID" value="NM_032985.6"/>
</dbReference>
<dbReference type="RefSeq" id="NP_116781.1">
    <property type="nucleotide sequence ID" value="NM_032986.5"/>
</dbReference>
<dbReference type="RefSeq" id="XP_016883082.1">
    <property type="nucleotide sequence ID" value="XM_017027593.1"/>
</dbReference>
<dbReference type="SMR" id="Q15437"/>
<dbReference type="BioGRID" id="115746">
    <property type="interactions" value="236"/>
</dbReference>
<dbReference type="FunCoup" id="Q15437">
    <property type="interactions" value="2898"/>
</dbReference>
<dbReference type="IntAct" id="Q15437">
    <property type="interactions" value="91"/>
</dbReference>
<dbReference type="MINT" id="Q15437"/>
<dbReference type="STRING" id="9606.ENSP00000338844"/>
<dbReference type="GlyGen" id="Q15437">
    <property type="glycosylation" value="8 sites, 1 O-linked glycan (8 sites)"/>
</dbReference>
<dbReference type="iPTMnet" id="Q15437"/>
<dbReference type="MetOSite" id="Q15437"/>
<dbReference type="PhosphoSitePlus" id="Q15437"/>
<dbReference type="SwissPalm" id="Q15437"/>
<dbReference type="BioMuta" id="SEC23B"/>
<dbReference type="DMDM" id="20141794"/>
<dbReference type="jPOST" id="Q15437"/>
<dbReference type="MassIVE" id="Q15437"/>
<dbReference type="PaxDb" id="9606-ENSP00000338844"/>
<dbReference type="PeptideAtlas" id="Q15437"/>
<dbReference type="ProteomicsDB" id="60596"/>
<dbReference type="Pumba" id="Q15437"/>
<dbReference type="Antibodypedia" id="1407">
    <property type="antibodies" value="195 antibodies from 25 providers"/>
</dbReference>
<dbReference type="DNASU" id="10483"/>
<dbReference type="Ensembl" id="ENST00000262544.6">
    <property type="protein sequence ID" value="ENSP00000262544.2"/>
    <property type="gene ID" value="ENSG00000101310.17"/>
</dbReference>
<dbReference type="Ensembl" id="ENST00000336714.8">
    <property type="protein sequence ID" value="ENSP00000338844.3"/>
    <property type="gene ID" value="ENSG00000101310.17"/>
</dbReference>
<dbReference type="Ensembl" id="ENST00000377465.6">
    <property type="protein sequence ID" value="ENSP00000366685.1"/>
    <property type="gene ID" value="ENSG00000101310.17"/>
</dbReference>
<dbReference type="Ensembl" id="ENST00000650089.1">
    <property type="protein sequence ID" value="ENSP00000497473.1"/>
    <property type="gene ID" value="ENSG00000101310.17"/>
</dbReference>
<dbReference type="GeneID" id="10483"/>
<dbReference type="KEGG" id="hsa:10483"/>
<dbReference type="MANE-Select" id="ENST00000650089.1">
    <property type="protein sequence ID" value="ENSP00000497473.1"/>
    <property type="RefSeq nucleotide sequence ID" value="NM_006363.6"/>
    <property type="RefSeq protein sequence ID" value="NP_006354.2"/>
</dbReference>
<dbReference type="UCSC" id="uc002wqz.3">
    <property type="organism name" value="human"/>
</dbReference>
<dbReference type="AGR" id="HGNC:10702"/>
<dbReference type="CTD" id="10483"/>
<dbReference type="DisGeNET" id="10483"/>
<dbReference type="GeneCards" id="SEC23B"/>
<dbReference type="HGNC" id="HGNC:10702">
    <property type="gene designation" value="SEC23B"/>
</dbReference>
<dbReference type="HPA" id="ENSG00000101310">
    <property type="expression patterns" value="Low tissue specificity"/>
</dbReference>
<dbReference type="MalaCards" id="SEC23B"/>
<dbReference type="MIM" id="224100">
    <property type="type" value="phenotype"/>
</dbReference>
<dbReference type="MIM" id="610512">
    <property type="type" value="gene"/>
</dbReference>
<dbReference type="MIM" id="616858">
    <property type="type" value="phenotype"/>
</dbReference>
<dbReference type="neXtProt" id="NX_Q15437"/>
<dbReference type="OpenTargets" id="ENSG00000101310"/>
<dbReference type="Orphanet" id="98873">
    <property type="disease" value="Congenital dyserythropoietic anemia type II"/>
</dbReference>
<dbReference type="Orphanet" id="201">
    <property type="disease" value="Cowden syndrome"/>
</dbReference>
<dbReference type="PharmGKB" id="PA35625"/>
<dbReference type="VEuPathDB" id="HostDB:ENSG00000101310"/>
<dbReference type="eggNOG" id="KOG1986">
    <property type="taxonomic scope" value="Eukaryota"/>
</dbReference>
<dbReference type="GeneTree" id="ENSGT00390000006916"/>
<dbReference type="HOGENOM" id="CLU_008658_3_0_1"/>
<dbReference type="InParanoid" id="Q15437"/>
<dbReference type="OMA" id="MPWNIIP"/>
<dbReference type="OrthoDB" id="10256289at2759"/>
<dbReference type="PAN-GO" id="Q15437">
    <property type="GO annotations" value="4 GO annotations based on evolutionary models"/>
</dbReference>
<dbReference type="PhylomeDB" id="Q15437"/>
<dbReference type="TreeFam" id="TF300693"/>
<dbReference type="PathwayCommons" id="Q15437"/>
<dbReference type="SignaLink" id="Q15437"/>
<dbReference type="SIGNOR" id="Q15437"/>
<dbReference type="BioGRID-ORCS" id="10483">
    <property type="hits" value="46 hits in 1164 CRISPR screens"/>
</dbReference>
<dbReference type="CD-CODE" id="91857CE7">
    <property type="entry name" value="Nucleolus"/>
</dbReference>
<dbReference type="ChiTaRS" id="SEC23B">
    <property type="organism name" value="human"/>
</dbReference>
<dbReference type="GeneWiki" id="SEC23B"/>
<dbReference type="GenomeRNAi" id="10483"/>
<dbReference type="Pharos" id="Q15437">
    <property type="development level" value="Tbio"/>
</dbReference>
<dbReference type="PRO" id="PR:Q15437"/>
<dbReference type="Proteomes" id="UP000005640">
    <property type="component" value="Chromosome 20"/>
</dbReference>
<dbReference type="RNAct" id="Q15437">
    <property type="molecule type" value="protein"/>
</dbReference>
<dbReference type="Bgee" id="ENSG00000101310">
    <property type="expression patterns" value="Expressed in endothelial cell and 195 other cell types or tissues"/>
</dbReference>
<dbReference type="ExpressionAtlas" id="Q15437">
    <property type="expression patterns" value="baseline and differential"/>
</dbReference>
<dbReference type="GO" id="GO:0030127">
    <property type="term" value="C:COPII vesicle coat"/>
    <property type="evidence" value="ECO:0000318"/>
    <property type="project" value="GO_Central"/>
</dbReference>
<dbReference type="GO" id="GO:0005829">
    <property type="term" value="C:cytosol"/>
    <property type="evidence" value="ECO:0000314"/>
    <property type="project" value="HPA"/>
</dbReference>
<dbReference type="GO" id="GO:0012505">
    <property type="term" value="C:endomembrane system"/>
    <property type="evidence" value="ECO:0000314"/>
    <property type="project" value="MGI"/>
</dbReference>
<dbReference type="GO" id="GO:0005783">
    <property type="term" value="C:endoplasmic reticulum"/>
    <property type="evidence" value="ECO:0000314"/>
    <property type="project" value="UniProtKB"/>
</dbReference>
<dbReference type="GO" id="GO:0070971">
    <property type="term" value="C:endoplasmic reticulum exit site"/>
    <property type="evidence" value="ECO:0000318"/>
    <property type="project" value="GO_Central"/>
</dbReference>
<dbReference type="GO" id="GO:0005789">
    <property type="term" value="C:endoplasmic reticulum membrane"/>
    <property type="evidence" value="ECO:0007669"/>
    <property type="project" value="UniProtKB-SubCell"/>
</dbReference>
<dbReference type="GO" id="GO:0048471">
    <property type="term" value="C:perinuclear region of cytoplasm"/>
    <property type="evidence" value="ECO:0007669"/>
    <property type="project" value="Ensembl"/>
</dbReference>
<dbReference type="GO" id="GO:0005096">
    <property type="term" value="F:GTPase activator activity"/>
    <property type="evidence" value="ECO:0000318"/>
    <property type="project" value="GO_Central"/>
</dbReference>
<dbReference type="GO" id="GO:0008270">
    <property type="term" value="F:zinc ion binding"/>
    <property type="evidence" value="ECO:0007669"/>
    <property type="project" value="InterPro"/>
</dbReference>
<dbReference type="GO" id="GO:0090110">
    <property type="term" value="P:COPII-coated vesicle cargo loading"/>
    <property type="evidence" value="ECO:0000318"/>
    <property type="project" value="GO_Central"/>
</dbReference>
<dbReference type="GO" id="GO:0006886">
    <property type="term" value="P:intracellular protein transport"/>
    <property type="evidence" value="ECO:0007669"/>
    <property type="project" value="InterPro"/>
</dbReference>
<dbReference type="CDD" id="cd01478">
    <property type="entry name" value="Sec23-like"/>
    <property type="match status" value="1"/>
</dbReference>
<dbReference type="CDD" id="cd11287">
    <property type="entry name" value="Sec23_C"/>
    <property type="match status" value="1"/>
</dbReference>
<dbReference type="FunFam" id="1.20.120.730:FF:000003">
    <property type="entry name" value="Protein transport protein SEC23"/>
    <property type="match status" value="1"/>
</dbReference>
<dbReference type="FunFam" id="2.30.30.380:FF:000001">
    <property type="entry name" value="Protein transport protein SEC23"/>
    <property type="match status" value="1"/>
</dbReference>
<dbReference type="FunFam" id="2.60.40.1670:FF:000006">
    <property type="entry name" value="Protein transport protein SEC23"/>
    <property type="match status" value="1"/>
</dbReference>
<dbReference type="FunFam" id="3.40.20.10:FF:000003">
    <property type="entry name" value="Protein transport protein SEC23"/>
    <property type="match status" value="1"/>
</dbReference>
<dbReference type="FunFam" id="3.40.50.410:FF:000011">
    <property type="entry name" value="Protein transport protein SEC23"/>
    <property type="match status" value="1"/>
</dbReference>
<dbReference type="Gene3D" id="2.60.40.1670">
    <property type="entry name" value="beta-sandwich domain of Sec23/24"/>
    <property type="match status" value="1"/>
</dbReference>
<dbReference type="Gene3D" id="1.20.120.730">
    <property type="entry name" value="Sec23/Sec24 helical domain"/>
    <property type="match status" value="1"/>
</dbReference>
<dbReference type="Gene3D" id="3.40.20.10">
    <property type="entry name" value="Severin"/>
    <property type="match status" value="1"/>
</dbReference>
<dbReference type="Gene3D" id="3.40.50.410">
    <property type="entry name" value="von Willebrand factor, type A domain"/>
    <property type="match status" value="1"/>
</dbReference>
<dbReference type="Gene3D" id="2.30.30.380">
    <property type="entry name" value="Zn-finger domain of Sec23/24"/>
    <property type="match status" value="1"/>
</dbReference>
<dbReference type="InterPro" id="IPR029006">
    <property type="entry name" value="ADF-H/Gelsolin-like_dom_sf"/>
</dbReference>
<dbReference type="InterPro" id="IPR007123">
    <property type="entry name" value="Gelsolin-like_dom"/>
</dbReference>
<dbReference type="InterPro" id="IPR036180">
    <property type="entry name" value="Gelsolin-like_dom_sf"/>
</dbReference>
<dbReference type="InterPro" id="IPR037364">
    <property type="entry name" value="Sec23"/>
</dbReference>
<dbReference type="InterPro" id="IPR006900">
    <property type="entry name" value="Sec23/24_helical_dom"/>
</dbReference>
<dbReference type="InterPro" id="IPR036175">
    <property type="entry name" value="Sec23/24_helical_dom_sf"/>
</dbReference>
<dbReference type="InterPro" id="IPR006896">
    <property type="entry name" value="Sec23/24_trunk_dom"/>
</dbReference>
<dbReference type="InterPro" id="IPR012990">
    <property type="entry name" value="Sec23_24_beta_S"/>
</dbReference>
<dbReference type="InterPro" id="IPR037550">
    <property type="entry name" value="Sec23_C"/>
</dbReference>
<dbReference type="InterPro" id="IPR036465">
    <property type="entry name" value="vWFA_dom_sf"/>
</dbReference>
<dbReference type="InterPro" id="IPR006895">
    <property type="entry name" value="Znf_Sec23_Sec24"/>
</dbReference>
<dbReference type="InterPro" id="IPR036174">
    <property type="entry name" value="Znf_Sec23_Sec24_sf"/>
</dbReference>
<dbReference type="PANTHER" id="PTHR11141">
    <property type="entry name" value="PROTEIN TRANSPORT PROTEIN SEC23"/>
    <property type="match status" value="1"/>
</dbReference>
<dbReference type="PANTHER" id="PTHR11141:SF10">
    <property type="entry name" value="PROTEIN TRANSPORT PROTEIN SEC23B"/>
    <property type="match status" value="1"/>
</dbReference>
<dbReference type="Pfam" id="PF00626">
    <property type="entry name" value="Gelsolin"/>
    <property type="match status" value="1"/>
</dbReference>
<dbReference type="Pfam" id="PF08033">
    <property type="entry name" value="Sec23_BS"/>
    <property type="match status" value="1"/>
</dbReference>
<dbReference type="Pfam" id="PF04815">
    <property type="entry name" value="Sec23_helical"/>
    <property type="match status" value="1"/>
</dbReference>
<dbReference type="Pfam" id="PF04811">
    <property type="entry name" value="Sec23_trunk"/>
    <property type="match status" value="1"/>
</dbReference>
<dbReference type="Pfam" id="PF04810">
    <property type="entry name" value="zf-Sec23_Sec24"/>
    <property type="match status" value="1"/>
</dbReference>
<dbReference type="SUPFAM" id="SSF81995">
    <property type="entry name" value="beta-sandwich domain of Sec23/24"/>
    <property type="match status" value="1"/>
</dbReference>
<dbReference type="SUPFAM" id="SSF82754">
    <property type="entry name" value="C-terminal, gelsolin-like domain of Sec23/24"/>
    <property type="match status" value="1"/>
</dbReference>
<dbReference type="SUPFAM" id="SSF81811">
    <property type="entry name" value="Helical domain of Sec23/24"/>
    <property type="match status" value="1"/>
</dbReference>
<dbReference type="SUPFAM" id="SSF53300">
    <property type="entry name" value="vWA-like"/>
    <property type="match status" value="1"/>
</dbReference>
<dbReference type="SUPFAM" id="SSF82919">
    <property type="entry name" value="Zn-finger domain of Sec23/24"/>
    <property type="match status" value="1"/>
</dbReference>
<organism>
    <name type="scientific">Homo sapiens</name>
    <name type="common">Human</name>
    <dbReference type="NCBI Taxonomy" id="9606"/>
    <lineage>
        <taxon>Eukaryota</taxon>
        <taxon>Metazoa</taxon>
        <taxon>Chordata</taxon>
        <taxon>Craniata</taxon>
        <taxon>Vertebrata</taxon>
        <taxon>Euteleostomi</taxon>
        <taxon>Mammalia</taxon>
        <taxon>Eutheria</taxon>
        <taxon>Euarchontoglires</taxon>
        <taxon>Primates</taxon>
        <taxon>Haplorrhini</taxon>
        <taxon>Catarrhini</taxon>
        <taxon>Hominidae</taxon>
        <taxon>Homo</taxon>
    </lineage>
</organism>
<reference key="1">
    <citation type="journal article" date="1996" name="Mol. Biol. Cell">
        <title>Cloning and functional characterization of mammalian homologues of the COPII component Sec23.</title>
        <authorList>
            <person name="Paccaud J.-P."/>
            <person name="Reith W."/>
            <person name="Carpentier J.-L."/>
            <person name="Ravazzola M."/>
            <person name="Amherdt M."/>
            <person name="Schekman R."/>
            <person name="Orci L."/>
        </authorList>
    </citation>
    <scope>NUCLEOTIDE SEQUENCE [MRNA]</scope>
    <scope>VARIANT GLN-489</scope>
    <scope>TISSUE SPECIFICITY</scope>
    <source>
        <tissue>B-cell</tissue>
    </source>
</reference>
<reference key="2">
    <citation type="journal article" date="2001" name="Nature">
        <title>The DNA sequence and comparative analysis of human chromosome 20.</title>
        <authorList>
            <person name="Deloukas P."/>
            <person name="Matthews L.H."/>
            <person name="Ashurst J.L."/>
            <person name="Burton J."/>
            <person name="Gilbert J.G.R."/>
            <person name="Jones M."/>
            <person name="Stavrides G."/>
            <person name="Almeida J.P."/>
            <person name="Babbage A.K."/>
            <person name="Bagguley C.L."/>
            <person name="Bailey J."/>
            <person name="Barlow K.F."/>
            <person name="Bates K.N."/>
            <person name="Beard L.M."/>
            <person name="Beare D.M."/>
            <person name="Beasley O.P."/>
            <person name="Bird C.P."/>
            <person name="Blakey S.E."/>
            <person name="Bridgeman A.M."/>
            <person name="Brown A.J."/>
            <person name="Buck D."/>
            <person name="Burrill W.D."/>
            <person name="Butler A.P."/>
            <person name="Carder C."/>
            <person name="Carter N.P."/>
            <person name="Chapman J.C."/>
            <person name="Clamp M."/>
            <person name="Clark G."/>
            <person name="Clark L.N."/>
            <person name="Clark S.Y."/>
            <person name="Clee C.M."/>
            <person name="Clegg S."/>
            <person name="Cobley V.E."/>
            <person name="Collier R.E."/>
            <person name="Connor R.E."/>
            <person name="Corby N.R."/>
            <person name="Coulson A."/>
            <person name="Coville G.J."/>
            <person name="Deadman R."/>
            <person name="Dhami P.D."/>
            <person name="Dunn M."/>
            <person name="Ellington A.G."/>
            <person name="Frankland J.A."/>
            <person name="Fraser A."/>
            <person name="French L."/>
            <person name="Garner P."/>
            <person name="Grafham D.V."/>
            <person name="Griffiths C."/>
            <person name="Griffiths M.N.D."/>
            <person name="Gwilliam R."/>
            <person name="Hall R.E."/>
            <person name="Hammond S."/>
            <person name="Harley J.L."/>
            <person name="Heath P.D."/>
            <person name="Ho S."/>
            <person name="Holden J.L."/>
            <person name="Howden P.J."/>
            <person name="Huckle E."/>
            <person name="Hunt A.R."/>
            <person name="Hunt S.E."/>
            <person name="Jekosch K."/>
            <person name="Johnson C.M."/>
            <person name="Johnson D."/>
            <person name="Kay M.P."/>
            <person name="Kimberley A.M."/>
            <person name="King A."/>
            <person name="Knights A."/>
            <person name="Laird G.K."/>
            <person name="Lawlor S."/>
            <person name="Lehvaeslaiho M.H."/>
            <person name="Leversha M.A."/>
            <person name="Lloyd C."/>
            <person name="Lloyd D.M."/>
            <person name="Lovell J.D."/>
            <person name="Marsh V.L."/>
            <person name="Martin S.L."/>
            <person name="McConnachie L.J."/>
            <person name="McLay K."/>
            <person name="McMurray A.A."/>
            <person name="Milne S.A."/>
            <person name="Mistry D."/>
            <person name="Moore M.J.F."/>
            <person name="Mullikin J.C."/>
            <person name="Nickerson T."/>
            <person name="Oliver K."/>
            <person name="Parker A."/>
            <person name="Patel R."/>
            <person name="Pearce T.A.V."/>
            <person name="Peck A.I."/>
            <person name="Phillimore B.J.C.T."/>
            <person name="Prathalingam S.R."/>
            <person name="Plumb R.W."/>
            <person name="Ramsay H."/>
            <person name="Rice C.M."/>
            <person name="Ross M.T."/>
            <person name="Scott C.E."/>
            <person name="Sehra H.K."/>
            <person name="Shownkeen R."/>
            <person name="Sims S."/>
            <person name="Skuce C.D."/>
            <person name="Smith M.L."/>
            <person name="Soderlund C."/>
            <person name="Steward C.A."/>
            <person name="Sulston J.E."/>
            <person name="Swann R.M."/>
            <person name="Sycamore N."/>
            <person name="Taylor R."/>
            <person name="Tee L."/>
            <person name="Thomas D.W."/>
            <person name="Thorpe A."/>
            <person name="Tracey A."/>
            <person name="Tromans A.C."/>
            <person name="Vaudin M."/>
            <person name="Wall M."/>
            <person name="Wallis J.M."/>
            <person name="Whitehead S.L."/>
            <person name="Whittaker P."/>
            <person name="Willey D.L."/>
            <person name="Williams L."/>
            <person name="Williams S.A."/>
            <person name="Wilming L."/>
            <person name="Wray P.W."/>
            <person name="Hubbard T."/>
            <person name="Durbin R.M."/>
            <person name="Bentley D.R."/>
            <person name="Beck S."/>
            <person name="Rogers J."/>
        </authorList>
    </citation>
    <scope>NUCLEOTIDE SEQUENCE [LARGE SCALE GENOMIC DNA]</scope>
</reference>
<reference key="3">
    <citation type="submission" date="2005-09" db="EMBL/GenBank/DDBJ databases">
        <authorList>
            <person name="Mural R.J."/>
            <person name="Istrail S."/>
            <person name="Sutton G.G."/>
            <person name="Florea L."/>
            <person name="Halpern A.L."/>
            <person name="Mobarry C.M."/>
            <person name="Lippert R."/>
            <person name="Walenz B."/>
            <person name="Shatkay H."/>
            <person name="Dew I."/>
            <person name="Miller J.R."/>
            <person name="Flanigan M.J."/>
            <person name="Edwards N.J."/>
            <person name="Bolanos R."/>
            <person name="Fasulo D."/>
            <person name="Halldorsson B.V."/>
            <person name="Hannenhalli S."/>
            <person name="Turner R."/>
            <person name="Yooseph S."/>
            <person name="Lu F."/>
            <person name="Nusskern D.R."/>
            <person name="Shue B.C."/>
            <person name="Zheng X.H."/>
            <person name="Zhong F."/>
            <person name="Delcher A.L."/>
            <person name="Huson D.H."/>
            <person name="Kravitz S.A."/>
            <person name="Mouchard L."/>
            <person name="Reinert K."/>
            <person name="Remington K.A."/>
            <person name="Clark A.G."/>
            <person name="Waterman M.S."/>
            <person name="Eichler E.E."/>
            <person name="Adams M.D."/>
            <person name="Hunkapiller M.W."/>
            <person name="Myers E.W."/>
            <person name="Venter J.C."/>
        </authorList>
    </citation>
    <scope>NUCLEOTIDE SEQUENCE [LARGE SCALE GENOMIC DNA]</scope>
</reference>
<reference key="4">
    <citation type="journal article" date="2004" name="Genome Res.">
        <title>The status, quality, and expansion of the NIH full-length cDNA project: the Mammalian Gene Collection (MGC).</title>
        <authorList>
            <consortium name="The MGC Project Team"/>
        </authorList>
    </citation>
    <scope>NUCLEOTIDE SEQUENCE [LARGE SCALE MRNA]</scope>
    <scope>VARIANTS VAL-373 AND LEU-433</scope>
    <source>
        <tissue>Cervix</tissue>
        <tissue>Placenta</tissue>
        <tissue>Uterus</tissue>
    </source>
</reference>
<reference key="5">
    <citation type="journal article" date="2011" name="BMC Syst. Biol.">
        <title>Initial characterization of the human central proteome.</title>
        <authorList>
            <person name="Burkard T.R."/>
            <person name="Planyavsky M."/>
            <person name="Kaupe I."/>
            <person name="Breitwieser F.P."/>
            <person name="Buerckstuemmer T."/>
            <person name="Bennett K.L."/>
            <person name="Superti-Furga G."/>
            <person name="Colinge J."/>
        </authorList>
    </citation>
    <scope>IDENTIFICATION BY MASS SPECTROMETRY [LARGE SCALE ANALYSIS]</scope>
</reference>
<reference key="6">
    <citation type="journal article" date="2012" name="Mol. Cell. Proteomics">
        <title>Comparative large-scale characterisation of plant vs. mammal proteins reveals similar and idiosyncratic N-alpha acetylation features.</title>
        <authorList>
            <person name="Bienvenut W.V."/>
            <person name="Sumpton D."/>
            <person name="Martinez A."/>
            <person name="Lilla S."/>
            <person name="Espagne C."/>
            <person name="Meinnel T."/>
            <person name="Giglione C."/>
        </authorList>
    </citation>
    <scope>ACETYLATION [LARGE SCALE ANALYSIS] AT ALA-2</scope>
    <scope>CLEAVAGE OF INITIATOR METHIONINE [LARGE SCALE ANALYSIS]</scope>
    <scope>IDENTIFICATION BY MASS SPECTROMETRY [LARGE SCALE ANALYSIS]</scope>
</reference>
<reference key="7">
    <citation type="journal article" date="2012" name="Proc. Natl. Acad. Sci. U.S.A.">
        <title>N-terminal acetylome analyses and functional insights of the N-terminal acetyltransferase NatB.</title>
        <authorList>
            <person name="Van Damme P."/>
            <person name="Lasa M."/>
            <person name="Polevoda B."/>
            <person name="Gazquez C."/>
            <person name="Elosegui-Artola A."/>
            <person name="Kim D.S."/>
            <person name="De Juan-Pardo E."/>
            <person name="Demeyer K."/>
            <person name="Hole K."/>
            <person name="Larrea E."/>
            <person name="Timmerman E."/>
            <person name="Prieto J."/>
            <person name="Arnesen T."/>
            <person name="Sherman F."/>
            <person name="Gevaert K."/>
            <person name="Aldabe R."/>
        </authorList>
    </citation>
    <scope>ACETYLATION [LARGE SCALE ANALYSIS] AT ALA-2</scope>
    <scope>CLEAVAGE OF INITIATOR METHIONINE [LARGE SCALE ANALYSIS]</scope>
    <scope>IDENTIFICATION BY MASS SPECTROMETRY [LARGE SCALE ANALYSIS]</scope>
</reference>
<reference key="8">
    <citation type="journal article" date="2014" name="J. Proteomics">
        <title>An enzyme assisted RP-RPLC approach for in-depth analysis of human liver phosphoproteome.</title>
        <authorList>
            <person name="Bian Y."/>
            <person name="Song C."/>
            <person name="Cheng K."/>
            <person name="Dong M."/>
            <person name="Wang F."/>
            <person name="Huang J."/>
            <person name="Sun D."/>
            <person name="Wang L."/>
            <person name="Ye M."/>
            <person name="Zou H."/>
        </authorList>
    </citation>
    <scope>IDENTIFICATION BY MASS SPECTROMETRY [LARGE SCALE ANALYSIS]</scope>
    <source>
        <tissue>Liver</tissue>
    </source>
</reference>
<reference key="9">
    <citation type="journal article" date="2009" name="Hum. Mutat.">
        <title>Congenital dyserythropoietic anemia type II (CDAII) is caused by mutations in the SEC23B gene.</title>
        <authorList>
            <person name="Bianchi P."/>
            <person name="Fermo E."/>
            <person name="Vercellati C."/>
            <person name="Boschetti C."/>
            <person name="Barcellini W."/>
            <person name="Iurlo A."/>
            <person name="Marcello A.P."/>
            <person name="Righetti P.G."/>
            <person name="Zanella A."/>
        </authorList>
    </citation>
    <scope>VARIANTS CDAN2 TRP-14; LYS-109; ALA-348; CYS-497; LEU-603 AND CYS-701</scope>
    <scope>VARIANT GLN-489</scope>
</reference>
<reference key="10">
    <citation type="journal article" date="2009" name="Nat. Genet.">
        <title>Mutations affecting the secretory COPII coat component SEC23B cause congenital dyserythropoietic anemia type II.</title>
        <authorList>
            <person name="Schwarz K."/>
            <person name="Iolascon A."/>
            <person name="Verissimo F."/>
            <person name="Trede N.S."/>
            <person name="Horsley W."/>
            <person name="Chen W."/>
            <person name="Paw B.H."/>
            <person name="Hopfner K.-P."/>
            <person name="Holzmann K."/>
            <person name="Russo R."/>
            <person name="Esposito M.R."/>
            <person name="Spano D."/>
            <person name="De Falco L."/>
            <person name="Heinrich K."/>
            <person name="Joggerst B."/>
            <person name="Rojewski M.T."/>
            <person name="Perrotta S."/>
            <person name="Denecke J."/>
            <person name="Pannicke U."/>
            <person name="Delaunay J."/>
            <person name="Pepperkok R."/>
            <person name="Heimpel H."/>
        </authorList>
    </citation>
    <scope>VARIANTS CDAN2 TRP-14; LYS-109; GLY-239 AND TRP-530</scope>
    <scope>VARIANTS HIS-18; HIS-313; THR-318; ARG-386; ILE-426; CYS-462; CYS-497 AND VAL-524</scope>
    <scope>CHARACTERIZATION OF VARIANTS CDAN2 TRP-14; LYS-109 AND GLY-239</scope>
</reference>
<reference key="11">
    <citation type="journal article" date="2015" name="Am. J. Hum. Genet.">
        <title>Germline heterozygous variants in SEC23B are associated with Cowden syndrome and enriched in apparently sporadic thyroid cancer.</title>
        <authorList>
            <person name="Yehia L."/>
            <person name="Niazi F."/>
            <person name="Ni Y."/>
            <person name="Ngeow J."/>
            <person name="Sankunny M."/>
            <person name="Liu Z."/>
            <person name="Wei W."/>
            <person name="Mester J.L."/>
            <person name="Keri R.A."/>
            <person name="Zhang B."/>
            <person name="Eng C."/>
        </authorList>
    </citation>
    <scope>VARIANTS CWS7 LEU-164 AND GLY-594</scope>
    <scope>CHARACTERIZATION OF VARIANT CWS7 GLY-594</scope>
    <scope>INTERACTION WITH SAR1A</scope>
    <scope>SUBCELLULAR LOCATION</scope>
</reference>
<reference key="12">
    <citation type="journal article" date="2021" name="Ann. Hematol.">
        <title>Congenital dyserythropoietic anemia types Ib, II, and III: novel variants in the CDIN1 gene and functional study of a novel variant in the KIF23 gene.</title>
        <authorList>
            <person name="Mendez M."/>
            <person name="Moreno-Carralero M.I."/>
            <person name="Peri V.L."/>
            <person name="Camacho-Galan R."/>
            <person name="Bosch-Benitez J.M."/>
            <person name="Huerta-Aragones J."/>
            <person name="Sanchez-Calero-Guilarte J."/>
            <person name="Moreno-Risco M.B."/>
            <person name="Alonso-Dominguez J.M."/>
            <person name="Moran-Jimenez M.J."/>
        </authorList>
    </citation>
    <scope>VARIANTS CDAN2 TRP-14; GLY-239; LEU-436 AND 554-ARG--CYS-767 DEL</scope>
</reference>
<keyword id="KW-0007">Acetylation</keyword>
<keyword id="KW-1055">Congenital dyserythropoietic anemia</keyword>
<keyword id="KW-0963">Cytoplasm</keyword>
<keyword id="KW-0968">Cytoplasmic vesicle</keyword>
<keyword id="KW-0225">Disease variant</keyword>
<keyword id="KW-0256">Endoplasmic reticulum</keyword>
<keyword id="KW-0931">ER-Golgi transport</keyword>
<keyword id="KW-0360">Hereditary hemolytic anemia</keyword>
<keyword id="KW-0472">Membrane</keyword>
<keyword id="KW-0479">Metal-binding</keyword>
<keyword id="KW-0653">Protein transport</keyword>
<keyword id="KW-1267">Proteomics identification</keyword>
<keyword id="KW-1185">Reference proteome</keyword>
<keyword id="KW-0813">Transport</keyword>
<keyword id="KW-0862">Zinc</keyword>
<evidence type="ECO:0000250" key="1">
    <source>
        <dbReference type="UniProtKB" id="Q15436"/>
    </source>
</evidence>
<evidence type="ECO:0000250" key="2">
    <source>
        <dbReference type="UniProtKB" id="Q9D662"/>
    </source>
</evidence>
<evidence type="ECO:0000255" key="3"/>
<evidence type="ECO:0000269" key="4">
    <source>
    </source>
</evidence>
<evidence type="ECO:0000269" key="5">
    <source>
    </source>
</evidence>
<evidence type="ECO:0000269" key="6">
    <source>
    </source>
</evidence>
<evidence type="ECO:0000269" key="7">
    <source>
    </source>
</evidence>
<evidence type="ECO:0000269" key="8">
    <source>
    </source>
</evidence>
<evidence type="ECO:0000269" key="9">
    <source>
    </source>
</evidence>
<evidence type="ECO:0000303" key="10">
    <source>
    </source>
</evidence>
<evidence type="ECO:0000305" key="11"/>
<evidence type="ECO:0000312" key="12">
    <source>
        <dbReference type="HGNC" id="HGNC:10702"/>
    </source>
</evidence>
<evidence type="ECO:0007744" key="13">
    <source>
    </source>
</evidence>
<evidence type="ECO:0007744" key="14">
    <source>
    </source>
</evidence>
<comment type="function">
    <text evidence="1">Component of the coat protein complex II (COPII) which promotes the formation of transport vesicles from the endoplasmic reticulum (ER). The coat has two main functions, the physical deformation of the endoplasmic reticulum membrane into vesicles and the selection of cargo molecules for their transport to the Golgi complex.</text>
</comment>
<comment type="subunit">
    <text evidence="1 7">COPII is composed of at least five proteins: the Sec23/24 complex, the Sec13/31 complex and Sar1 (By similarity). Interacts with SAR1A (PubMed:26522472).</text>
</comment>
<comment type="interaction">
    <interactant intactId="EBI-742673">
        <id>Q15437</id>
    </interactant>
    <interactant intactId="EBI-746909">
        <id>Q8N684</id>
        <label>CPSF7</label>
    </interactant>
    <organismsDiffer>false</organismsDiffer>
    <experiments>3</experiments>
</comment>
<comment type="interaction">
    <interactant intactId="EBI-742673">
        <id>Q15437</id>
    </interactant>
    <interactant intactId="EBI-740376">
        <id>Q86UW9</id>
        <label>DTX2</label>
    </interactant>
    <organismsDiffer>false</organismsDiffer>
    <experiments>6</experiments>
</comment>
<comment type="interaction">
    <interactant intactId="EBI-742673">
        <id>Q15437</id>
    </interactant>
    <interactant intactId="EBI-743099">
        <id>Q969F0</id>
        <label>FATE1</label>
    </interactant>
    <organismsDiffer>false</organismsDiffer>
    <experiments>3</experiments>
</comment>
<comment type="interaction">
    <interactant intactId="EBI-742673">
        <id>Q15437</id>
    </interactant>
    <interactant intactId="EBI-8643838">
        <id>O43365</id>
        <label>HOXA3</label>
    </interactant>
    <organismsDiffer>false</organismsDiffer>
    <experiments>4</experiments>
</comment>
<comment type="interaction">
    <interactant intactId="EBI-742673">
        <id>Q15437</id>
    </interactant>
    <interactant intactId="EBI-466029">
        <id>P42858</id>
        <label>HTT</label>
    </interactant>
    <organismsDiffer>false</organismsDiffer>
    <experiments>3</experiments>
</comment>
<comment type="interaction">
    <interactant intactId="EBI-742673">
        <id>Q15437</id>
    </interactant>
    <interactant intactId="EBI-2560879">
        <id>Q96M27</id>
        <label>PRRC1</label>
    </interactant>
    <organismsDiffer>false</organismsDiffer>
    <experiments>3</experiments>
</comment>
<comment type="interaction">
    <interactant intactId="EBI-742673">
        <id>Q15437</id>
    </interactant>
    <interactant intactId="EBI-366017">
        <id>Q13671</id>
        <label>RIN1</label>
    </interactant>
    <organismsDiffer>false</organismsDiffer>
    <experiments>3</experiments>
</comment>
<comment type="interaction">
    <interactant intactId="EBI-742673">
        <id>Q15437</id>
    </interactant>
    <interactant intactId="EBI-81088">
        <id>Q15436</id>
        <label>SEC23A</label>
    </interactant>
    <organismsDiffer>false</organismsDiffer>
    <experiments>6</experiments>
</comment>
<comment type="interaction">
    <interactant intactId="EBI-742673">
        <id>Q15437</id>
    </interactant>
    <interactant intactId="EBI-81134">
        <id>P53992</id>
        <label>SEC24C</label>
    </interactant>
    <organismsDiffer>false</organismsDiffer>
    <experiments>5</experiments>
</comment>
<comment type="interaction">
    <interactant intactId="EBI-742673">
        <id>Q15437</id>
    </interactant>
    <interactant intactId="EBI-748817">
        <id>O94855</id>
        <label>SEC24D</label>
    </interactant>
    <organismsDiffer>false</organismsDiffer>
    <experiments>9</experiments>
</comment>
<comment type="interaction">
    <interactant intactId="EBI-742673">
        <id>Q15437</id>
    </interactant>
    <interactant intactId="EBI-12081096">
        <id>O94855-2</id>
        <label>SEC24D</label>
    </interactant>
    <organismsDiffer>false</organismsDiffer>
    <experiments>3</experiments>
</comment>
<comment type="interaction">
    <interactant intactId="EBI-742673">
        <id>Q15437</id>
    </interactant>
    <interactant intactId="EBI-766589">
        <id>P09234</id>
        <label>SNRPC</label>
    </interactant>
    <organismsDiffer>false</organismsDiffer>
    <experiments>3</experiments>
</comment>
<comment type="interaction">
    <interactant intactId="EBI-742673">
        <id>Q15437</id>
    </interactant>
    <interactant intactId="EBI-7131783">
        <id>Q8N205</id>
        <label>SYNE4</label>
    </interactant>
    <organismsDiffer>false</organismsDiffer>
    <experiments>3</experiments>
</comment>
<comment type="subcellular location">
    <subcellularLocation>
        <location evidence="1">Cytoplasmic vesicle</location>
        <location evidence="1">COPII-coated vesicle membrane</location>
        <topology evidence="1">Peripheral membrane protein</topology>
        <orientation evidence="1">Cytoplasmic side</orientation>
    </subcellularLocation>
    <subcellularLocation>
        <location evidence="7">Endoplasmic reticulum membrane</location>
        <topology evidence="1">Peripheral membrane protein</topology>
        <orientation evidence="1">Cytoplasmic side</orientation>
    </subcellularLocation>
    <subcellularLocation>
        <location evidence="1">Cytoplasm</location>
        <location evidence="1">Cytosol</location>
    </subcellularLocation>
</comment>
<comment type="tissue specificity">
    <text evidence="9">Ubiquitously expressed.</text>
</comment>
<comment type="disease" evidence="7">
    <disease id="DI-04679">
        <name>Cowden syndrome 7</name>
        <acronym>CWS7</acronym>
        <description>A form of Cowden syndrome, a hamartomatous polyposis syndrome with age-related penetrance. Cowden syndrome is characterized by hamartomatous lesions affecting derivatives of ectodermal, mesodermal and endodermal layers, macrocephaly, facial trichilemmomas (benign tumors of the hair follicle infundibulum), acral keratoses, papillomatous papules, and elevated risk for development of several types of malignancy, particularly breast carcinoma in women and thyroid carcinoma in both men and women. Colon cancer and renal cell carcinoma have also been reported. Hamartomas can be found in virtually every organ, but most commonly in the skin, gastrointestinal tract, breast and thyroid. CWS7 inheritance is autosomal dominant.</description>
        <dbReference type="MIM" id="616858"/>
    </disease>
    <text>The disease is caused by variants affecting the gene represented in this entry.</text>
</comment>
<comment type="disease" evidence="5 6 8">
    <disease id="DI-02476">
        <name>Anemia, congenital dyserythropoietic, 2</name>
        <acronym>CDAN2</acronym>
        <description>An autosomal recessive blood disorder characterized by morphological abnormalities of erythroblasts, ineffective erythropoiesis, normocytic anemia, iron overload, jaundice, and variable splenomegaly. Ultrastructural features include bi- or multinucleated erythroblasts in bone marrow, karyorrhexis, and the presence of Gaucher-like bone marrow histiocytes. The main biochemical feature of the disease is defective glycosylation of some red blood cells membrane proteins.</description>
        <dbReference type="MIM" id="224100"/>
    </disease>
    <text>The disease is caused by variants affecting the gene represented in this entry.</text>
</comment>
<comment type="similarity">
    <text evidence="11">Belongs to the SEC23/SEC24 family. SEC23 subfamily.</text>
</comment>
<name>SC23B_HUMAN</name>
<proteinExistence type="evidence at protein level"/>
<feature type="initiator methionine" description="Removed" evidence="13 14">
    <location>
        <position position="1"/>
    </location>
</feature>
<feature type="chain" id="PRO_0000205148" description="Protein transport protein Sec23B">
    <location>
        <begin position="2"/>
        <end position="767"/>
    </location>
</feature>
<feature type="repeat" description="Gelsolin-like" evidence="3">
    <location>
        <begin position="634"/>
        <end position="720"/>
    </location>
</feature>
<feature type="binding site" evidence="1">
    <location>
        <position position="61"/>
    </location>
    <ligand>
        <name>Zn(2+)</name>
        <dbReference type="ChEBI" id="CHEBI:29105"/>
    </ligand>
</feature>
<feature type="binding site" evidence="1">
    <location>
        <position position="66"/>
    </location>
    <ligand>
        <name>Zn(2+)</name>
        <dbReference type="ChEBI" id="CHEBI:29105"/>
    </ligand>
</feature>
<feature type="binding site" evidence="1">
    <location>
        <position position="85"/>
    </location>
    <ligand>
        <name>Zn(2+)</name>
        <dbReference type="ChEBI" id="CHEBI:29105"/>
    </ligand>
</feature>
<feature type="binding site" evidence="1">
    <location>
        <position position="88"/>
    </location>
    <ligand>
        <name>Zn(2+)</name>
        <dbReference type="ChEBI" id="CHEBI:29105"/>
    </ligand>
</feature>
<feature type="modified residue" description="N-acetylalanine" evidence="13 14">
    <location>
        <position position="2"/>
    </location>
</feature>
<feature type="modified residue" description="N6-acetyllysine" evidence="2">
    <location>
        <position position="564"/>
    </location>
</feature>
<feature type="sequence variant" id="VAR_062294" description="In CDAN2; the mutant protein is unstable with less than 5% of protein detectable compared to wild-type; dbSNP:rs121918222." evidence="5 6 8">
    <original>R</original>
    <variation>W</variation>
    <location>
        <position position="14"/>
    </location>
</feature>
<feature type="sequence variant" id="VAR_062295" description="In dbSNP:rs905074313." evidence="5">
    <original>R</original>
    <variation>H</variation>
    <location>
        <position position="18"/>
    </location>
</feature>
<feature type="sequence variant" id="VAR_062296" description="In CDAN2; the mutant protein is unstable with less than 5% of protein detectable compared to wild-type; dbSNP:rs121918221." evidence="5 6">
    <original>E</original>
    <variation>K</variation>
    <location>
        <position position="109"/>
    </location>
</feature>
<feature type="sequence variant" id="VAR_076424" description="In CWS7; uncertain significance; dbSNP:rs36023150." evidence="7">
    <original>V</original>
    <variation>L</variation>
    <location>
        <position position="164"/>
    </location>
</feature>
<feature type="sequence variant" id="VAR_062297" description="In CDAN2; uncertain significance; the mutant protein is expressed as the wild-type; dbSNP:rs761034212." evidence="5 8">
    <original>D</original>
    <variation>G</variation>
    <location>
        <position position="239"/>
    </location>
</feature>
<feature type="sequence variant" id="VAR_062298" description="In dbSNP:rs750888081." evidence="5">
    <original>R</original>
    <variation>H</variation>
    <location>
        <position position="313"/>
    </location>
</feature>
<feature type="sequence variant" id="VAR_062299" description="In dbSNP:rs953079477." evidence="5">
    <original>I</original>
    <variation>T</variation>
    <location>
        <position position="318"/>
    </location>
</feature>
<feature type="sequence variant" id="VAR_062300" description="In CDAN2." evidence="6">
    <original>D</original>
    <variation>A</variation>
    <location>
        <position position="348"/>
    </location>
</feature>
<feature type="sequence variant" id="VAR_062301" description="In dbSNP:rs17849992." evidence="4">
    <original>M</original>
    <variation>V</variation>
    <location>
        <position position="373"/>
    </location>
</feature>
<feature type="sequence variant" id="VAR_062302" evidence="5">
    <original>Q</original>
    <variation>R</variation>
    <location>
        <position position="386"/>
    </location>
</feature>
<feature type="sequence variant" id="VAR_062303" description="In dbSNP:rs41309927." evidence="5">
    <original>V</original>
    <variation>I</variation>
    <location>
        <position position="426"/>
    </location>
</feature>
<feature type="sequence variant" id="VAR_034482" description="In dbSNP:rs17807673." evidence="4">
    <original>P</original>
    <variation>L</variation>
    <location>
        <position position="433"/>
    </location>
</feature>
<feature type="sequence variant" id="VAR_086961" description="In CDAN2; uncertain significance." evidence="8">
    <original>S</original>
    <variation>L</variation>
    <location>
        <position position="436"/>
    </location>
</feature>
<feature type="sequence variant" id="VAR_062304" description="In dbSNP:rs780978419." evidence="5">
    <original>Y</original>
    <variation>C</variation>
    <location>
        <position position="462"/>
    </location>
</feature>
<feature type="sequence variant" id="VAR_020318" description="In dbSNP:rs2273526." evidence="6 9">
    <original>H</original>
    <variation>Q</variation>
    <location>
        <position position="489"/>
    </location>
</feature>
<feature type="sequence variant" id="VAR_062305" description="In CDAN2; uncertain significance; dbSNP:rs727504145." evidence="5 6">
    <original>R</original>
    <variation>C</variation>
    <location>
        <position position="497"/>
    </location>
</feature>
<feature type="sequence variant" id="VAR_062306" description="In dbSNP:rs398124225." evidence="5">
    <original>A</original>
    <variation>V</variation>
    <location>
        <position position="524"/>
    </location>
</feature>
<feature type="sequence variant" id="VAR_062307" description="In CDAN2; dbSNP:rs121918223." evidence="5">
    <original>R</original>
    <variation>W</variation>
    <location>
        <position position="530"/>
    </location>
</feature>
<feature type="sequence variant" id="VAR_086962" description="In CDAN2." evidence="8">
    <location>
        <begin position="554"/>
        <end position="767"/>
    </location>
</feature>
<feature type="sequence variant" id="VAR_076425" description="In CWS7; aberrant aggregation; causes mislocalization of the protein in the cytoplasm; reduces interaction with SAR1A; confers endoplasmic reticulum (ER) stress-mediated cell growth advantage; dbSNP:rs752366963." evidence="7">
    <original>V</original>
    <variation>G</variation>
    <location>
        <position position="594"/>
    </location>
</feature>
<feature type="sequence variant" id="VAR_062308" description="In CDAN2." evidence="6">
    <original>S</original>
    <variation>L</variation>
    <location>
        <position position="603"/>
    </location>
</feature>
<feature type="sequence variant" id="VAR_062309" description="In CDAN2; dbSNP:rs201270568." evidence="6">
    <original>R</original>
    <variation>C</variation>
    <location>
        <position position="701"/>
    </location>
</feature>
<protein>
    <recommendedName>
        <fullName evidence="11">Protein transport protein Sec23B</fullName>
        <shortName evidence="10">hSec23B</shortName>
    </recommendedName>
    <alternativeName>
        <fullName>SEC23-related protein B</fullName>
    </alternativeName>
</protein>
<accession>Q15437</accession>
<accession>D3DW33</accession>
<accession>Q503A9</accession>
<accession>Q5W183</accession>
<accession>Q9BS15</accession>
<accession>Q9BSI2</accession>
<accession>Q9H1D7</accession>
<gene>
    <name evidence="12" type="primary">SEC23B</name>
</gene>